<reference key="1">
    <citation type="submission" date="1999-12" db="EMBL/GenBank/DDBJ databases">
        <title>Trehalose biosynthesis operon in S. typhimurium.</title>
        <authorList>
            <person name="Howells A.M."/>
            <person name="Bullifent H.L."/>
            <person name="Dhaliwal K."/>
            <person name="Griffin K."/>
            <person name="Frith G."/>
            <person name="Tunnacliffe A."/>
            <person name="Titball R.W."/>
        </authorList>
    </citation>
    <scope>NUCLEOTIDE SEQUENCE [GENOMIC DNA]</scope>
    <source>
        <strain>SL1344</strain>
    </source>
</reference>
<reference key="2">
    <citation type="journal article" date="2012" name="Proc. Natl. Acad. Sci. U.S.A.">
        <title>The transcriptional landscape and small RNAs of Salmonella enterica serovar Typhimurium.</title>
        <authorList>
            <person name="Kroger C."/>
            <person name="Dillon S.C."/>
            <person name="Cameron A.D."/>
            <person name="Papenfort K."/>
            <person name="Sivasankaran S.K."/>
            <person name="Hokamp K."/>
            <person name="Chao Y."/>
            <person name="Sittka A."/>
            <person name="Hebrard M."/>
            <person name="Handler K."/>
            <person name="Colgan A."/>
            <person name="Leekitcharoenphon P."/>
            <person name="Langridge G.C."/>
            <person name="Lohan A.J."/>
            <person name="Loftus B."/>
            <person name="Lucchini S."/>
            <person name="Ussery D.W."/>
            <person name="Dorman C.J."/>
            <person name="Thomson N.R."/>
            <person name="Vogel J."/>
            <person name="Hinton J.C."/>
        </authorList>
    </citation>
    <scope>NUCLEOTIDE SEQUENCE [LARGE SCALE GENOMIC DNA]</scope>
    <source>
        <strain>SL1344</strain>
    </source>
</reference>
<proteinExistence type="inferred from homology"/>
<accession>E1WGG8</accession>
<accession>P0A1Q0</accession>
<accession>Q9L893</accession>
<dbReference type="EC" id="2.4.1.15" evidence="2"/>
<dbReference type="EMBL" id="AF213176">
    <property type="protein sequence ID" value="AAF34582.1"/>
    <property type="molecule type" value="Genomic_DNA"/>
</dbReference>
<dbReference type="EMBL" id="FQ312003">
    <property type="protein sequence ID" value="CBW17956.1"/>
    <property type="molecule type" value="Genomic_DNA"/>
</dbReference>
<dbReference type="RefSeq" id="WP_000089042.1">
    <property type="nucleotide sequence ID" value="NZ_QASL01000015.1"/>
</dbReference>
<dbReference type="SMR" id="E1WGG8"/>
<dbReference type="CAZy" id="GT20">
    <property type="family name" value="Glycosyltransferase Family 20"/>
</dbReference>
<dbReference type="KEGG" id="sey:SL1344_1862"/>
<dbReference type="PATRIC" id="fig|216597.6.peg.2067"/>
<dbReference type="HOGENOM" id="CLU_002351_7_1_6"/>
<dbReference type="BioCyc" id="SENT216597:SL1344_RS09645-MONOMER"/>
<dbReference type="UniPathway" id="UPA00299"/>
<dbReference type="Proteomes" id="UP000008962">
    <property type="component" value="Chromosome"/>
</dbReference>
<dbReference type="GO" id="GO:0003825">
    <property type="term" value="F:alpha,alpha-trehalose-phosphate synthase (UDP-forming) activity"/>
    <property type="evidence" value="ECO:0007669"/>
    <property type="project" value="UniProtKB-EC"/>
</dbReference>
<dbReference type="GO" id="GO:0005992">
    <property type="term" value="P:trehalose biosynthetic process"/>
    <property type="evidence" value="ECO:0007669"/>
    <property type="project" value="UniProtKB-UniPathway"/>
</dbReference>
<dbReference type="CDD" id="cd03788">
    <property type="entry name" value="GT20_TPS"/>
    <property type="match status" value="1"/>
</dbReference>
<dbReference type="FunFam" id="3.40.50.2000:FF:000024">
    <property type="entry name" value="Trehalose-6-phosphate synthase"/>
    <property type="match status" value="1"/>
</dbReference>
<dbReference type="Gene3D" id="3.40.50.2000">
    <property type="entry name" value="Glycogen Phosphorylase B"/>
    <property type="match status" value="2"/>
</dbReference>
<dbReference type="InterPro" id="IPR001830">
    <property type="entry name" value="Glyco_trans_20"/>
</dbReference>
<dbReference type="InterPro" id="IPR012766">
    <property type="entry name" value="Trehalose_OtsA"/>
</dbReference>
<dbReference type="NCBIfam" id="NF007513">
    <property type="entry name" value="PRK10117.1"/>
    <property type="match status" value="1"/>
</dbReference>
<dbReference type="NCBIfam" id="TIGR02400">
    <property type="entry name" value="trehalose_OtsA"/>
    <property type="match status" value="1"/>
</dbReference>
<dbReference type="PANTHER" id="PTHR10788:SF106">
    <property type="entry name" value="BCDNA.GH08860"/>
    <property type="match status" value="1"/>
</dbReference>
<dbReference type="PANTHER" id="PTHR10788">
    <property type="entry name" value="TREHALOSE-6-PHOSPHATE SYNTHASE"/>
    <property type="match status" value="1"/>
</dbReference>
<dbReference type="Pfam" id="PF00982">
    <property type="entry name" value="Glyco_transf_20"/>
    <property type="match status" value="1"/>
</dbReference>
<dbReference type="SUPFAM" id="SSF53756">
    <property type="entry name" value="UDP-Glycosyltransferase/glycogen phosphorylase"/>
    <property type="match status" value="1"/>
</dbReference>
<protein>
    <recommendedName>
        <fullName evidence="2">Trehalose-6-phosphate synthase</fullName>
        <shortName evidence="2">TPS</shortName>
        <ecNumber evidence="2">2.4.1.15</ecNumber>
    </recommendedName>
    <alternativeName>
        <fullName evidence="2">Alpha,alpha-trehalose-phosphate synthase [UDP-forming]</fullName>
    </alternativeName>
    <alternativeName>
        <fullName evidence="2">Osmoregulatory trehalose synthesis protein A</fullName>
        <shortName evidence="2">OtsA</shortName>
    </alternativeName>
    <alternativeName>
        <fullName evidence="2">UDP-glucose-glucosephosphate glucosyltransferase</fullName>
    </alternativeName>
</protein>
<evidence type="ECO:0000250" key="1"/>
<evidence type="ECO:0000250" key="2">
    <source>
        <dbReference type="UniProtKB" id="P31677"/>
    </source>
</evidence>
<evidence type="ECO:0000256" key="3">
    <source>
        <dbReference type="SAM" id="MobiDB-lite"/>
    </source>
</evidence>
<feature type="initiator methionine" description="Removed" evidence="1">
    <location>
        <position position="1"/>
    </location>
</feature>
<feature type="chain" id="PRO_0000405417" description="Trehalose-6-phosphate synthase">
    <location>
        <begin position="2"/>
        <end position="473"/>
    </location>
</feature>
<feature type="region of interest" description="Disordered" evidence="3">
    <location>
        <begin position="454"/>
        <end position="473"/>
    </location>
</feature>
<feature type="binding site" evidence="2">
    <location>
        <position position="10"/>
    </location>
    <ligand>
        <name>D-glucose 6-phosphate</name>
        <dbReference type="ChEBI" id="CHEBI:61548"/>
    </ligand>
</feature>
<feature type="binding site" evidence="2">
    <location>
        <begin position="21"/>
        <end position="22"/>
    </location>
    <ligand>
        <name>UDP-alpha-D-glucose</name>
        <dbReference type="ChEBI" id="CHEBI:58885"/>
    </ligand>
</feature>
<feature type="binding site" evidence="2">
    <location>
        <position position="76"/>
    </location>
    <ligand>
        <name>D-glucose 6-phosphate</name>
        <dbReference type="ChEBI" id="CHEBI:61548"/>
    </ligand>
</feature>
<feature type="binding site" evidence="2">
    <location>
        <position position="130"/>
    </location>
    <ligand>
        <name>D-glucose 6-phosphate</name>
        <dbReference type="ChEBI" id="CHEBI:61548"/>
    </ligand>
</feature>
<feature type="binding site" evidence="2">
    <location>
        <position position="262"/>
    </location>
    <ligand>
        <name>UDP-alpha-D-glucose</name>
        <dbReference type="ChEBI" id="CHEBI:58885"/>
    </ligand>
</feature>
<feature type="binding site" evidence="2">
    <location>
        <position position="267"/>
    </location>
    <ligand>
        <name>UDP-alpha-D-glucose</name>
        <dbReference type="ChEBI" id="CHEBI:58885"/>
    </ligand>
</feature>
<feature type="binding site" evidence="2">
    <location>
        <position position="300"/>
    </location>
    <ligand>
        <name>D-glucose 6-phosphate</name>
        <dbReference type="ChEBI" id="CHEBI:61548"/>
    </ligand>
</feature>
<feature type="binding site" evidence="2">
    <location>
        <position position="339"/>
    </location>
    <ligand>
        <name>UDP-alpha-D-glucose</name>
        <dbReference type="ChEBI" id="CHEBI:58885"/>
    </ligand>
</feature>
<feature type="binding site" evidence="2">
    <location>
        <begin position="365"/>
        <end position="369"/>
    </location>
    <ligand>
        <name>UDP-alpha-D-glucose</name>
        <dbReference type="ChEBI" id="CHEBI:58885"/>
    </ligand>
</feature>
<feature type="site" description="Involved in alpha anomer selectivity" evidence="2">
    <location>
        <position position="85"/>
    </location>
</feature>
<feature type="site" description="Involved in alpha anomer selectivity" evidence="2">
    <location>
        <position position="155"/>
    </location>
</feature>
<gene>
    <name evidence="2" type="primary">otsA</name>
    <name type="ordered locus">SL1344_1862</name>
</gene>
<keyword id="KW-0328">Glycosyltransferase</keyword>
<keyword id="KW-0808">Transferase</keyword>
<organism>
    <name type="scientific">Salmonella typhimurium (strain SL1344)</name>
    <dbReference type="NCBI Taxonomy" id="216597"/>
    <lineage>
        <taxon>Bacteria</taxon>
        <taxon>Pseudomonadati</taxon>
        <taxon>Pseudomonadota</taxon>
        <taxon>Gammaproteobacteria</taxon>
        <taxon>Enterobacterales</taxon>
        <taxon>Enterobacteriaceae</taxon>
        <taxon>Salmonella</taxon>
    </lineage>
</organism>
<comment type="function">
    <text evidence="2">Probably involved in the osmoprotection via the biosynthesis of trehalose. Catalyzes the transfer of glucose from UDP-alpha-D-glucose (UDP-Glc) to D-glucose 6-phosphate (Glc-6-P) to form trehalose-6-phosphate. Acts with retention of the anomeric configuration of the UDP-sugar donor.</text>
</comment>
<comment type="catalytic activity">
    <reaction evidence="2">
        <text>D-glucose 6-phosphate + UDP-alpha-D-glucose = alpha,alpha-trehalose 6-phosphate + UDP + H(+)</text>
        <dbReference type="Rhea" id="RHEA:18889"/>
        <dbReference type="ChEBI" id="CHEBI:15378"/>
        <dbReference type="ChEBI" id="CHEBI:58223"/>
        <dbReference type="ChEBI" id="CHEBI:58429"/>
        <dbReference type="ChEBI" id="CHEBI:58885"/>
        <dbReference type="ChEBI" id="CHEBI:61548"/>
        <dbReference type="EC" id="2.4.1.15"/>
    </reaction>
</comment>
<comment type="pathway">
    <text evidence="2">Glycan biosynthesis; trehalose biosynthesis.</text>
</comment>
<comment type="subunit">
    <text evidence="2">Homotetramer.</text>
</comment>
<comment type="similarity">
    <text evidence="2">Belongs to the glycosyltransferase 20 family.</text>
</comment>
<sequence>MSRLVVVSNRIAPPDNKGGAGGLAVGVLGALKAAGGLWFGWSGETGNEDEPLKKVTKGNITWASFNLSEQDYEDYYCQFSNAVLWPAFHYRLDLVQFQRPAWEGYMRVNALLADKLLPLIKENDIIWVHDYHLLPFASELRKRGVNNRIGFFLHIPFPTPEIFNALPPHDELLEQLCDFDLLGFQTENDRLAFLDSLSSQTRVTTRSGKQHIAWGKDFQTEVYPIGIEPDEIALQAAGPLPPKLAQLKAELKNVKNIFSVERLDYSKGLPERFLAYEALLENYPQHRGKIRYTQIAPTSRGEVQAYQDIRHQLETEAGRINGKYGQLGWTPLYYLNQHFDRKLLMKIFRYSDVGLVTPLRDGMNLVAKEFVAAQDPANPGVLVLSQFAGAANELTSALIVNPYDRDDVAAALNRALTMPLAERISRHAEMLDVIVKNDINRWQERFIHDLKEVTPRSPERQQQNNVATFPKLA</sequence>
<name>OTSA_SALTS</name>